<gene>
    <name evidence="1" type="primary">glmM</name>
    <name type="ordered locus">Krad_0722</name>
</gene>
<organism>
    <name type="scientific">Kineococcus radiotolerans (strain ATCC BAA-149 / DSM 14245 / SRS30216)</name>
    <dbReference type="NCBI Taxonomy" id="266940"/>
    <lineage>
        <taxon>Bacteria</taxon>
        <taxon>Bacillati</taxon>
        <taxon>Actinomycetota</taxon>
        <taxon>Actinomycetes</taxon>
        <taxon>Kineosporiales</taxon>
        <taxon>Kineosporiaceae</taxon>
        <taxon>Kineococcus</taxon>
    </lineage>
</organism>
<proteinExistence type="inferred from homology"/>
<dbReference type="EC" id="5.4.2.10" evidence="1"/>
<dbReference type="EMBL" id="CP000750">
    <property type="protein sequence ID" value="ABS02211.1"/>
    <property type="molecule type" value="Genomic_DNA"/>
</dbReference>
<dbReference type="RefSeq" id="WP_012084943.1">
    <property type="nucleotide sequence ID" value="NC_009664.2"/>
</dbReference>
<dbReference type="SMR" id="A6W5X2"/>
<dbReference type="STRING" id="266940.Krad_0722"/>
<dbReference type="KEGG" id="kra:Krad_0722"/>
<dbReference type="eggNOG" id="COG1109">
    <property type="taxonomic scope" value="Bacteria"/>
</dbReference>
<dbReference type="HOGENOM" id="CLU_016950_7_0_11"/>
<dbReference type="OrthoDB" id="9803322at2"/>
<dbReference type="Proteomes" id="UP000001116">
    <property type="component" value="Chromosome"/>
</dbReference>
<dbReference type="GO" id="GO:0005829">
    <property type="term" value="C:cytosol"/>
    <property type="evidence" value="ECO:0007669"/>
    <property type="project" value="TreeGrafter"/>
</dbReference>
<dbReference type="GO" id="GO:0000287">
    <property type="term" value="F:magnesium ion binding"/>
    <property type="evidence" value="ECO:0007669"/>
    <property type="project" value="UniProtKB-UniRule"/>
</dbReference>
<dbReference type="GO" id="GO:0008966">
    <property type="term" value="F:phosphoglucosamine mutase activity"/>
    <property type="evidence" value="ECO:0007669"/>
    <property type="project" value="UniProtKB-UniRule"/>
</dbReference>
<dbReference type="GO" id="GO:0004615">
    <property type="term" value="F:phosphomannomutase activity"/>
    <property type="evidence" value="ECO:0007669"/>
    <property type="project" value="TreeGrafter"/>
</dbReference>
<dbReference type="GO" id="GO:0005975">
    <property type="term" value="P:carbohydrate metabolic process"/>
    <property type="evidence" value="ECO:0007669"/>
    <property type="project" value="InterPro"/>
</dbReference>
<dbReference type="GO" id="GO:0009252">
    <property type="term" value="P:peptidoglycan biosynthetic process"/>
    <property type="evidence" value="ECO:0007669"/>
    <property type="project" value="TreeGrafter"/>
</dbReference>
<dbReference type="GO" id="GO:0006048">
    <property type="term" value="P:UDP-N-acetylglucosamine biosynthetic process"/>
    <property type="evidence" value="ECO:0007669"/>
    <property type="project" value="TreeGrafter"/>
</dbReference>
<dbReference type="CDD" id="cd05802">
    <property type="entry name" value="GlmM"/>
    <property type="match status" value="1"/>
</dbReference>
<dbReference type="FunFam" id="3.30.310.50:FF:000001">
    <property type="entry name" value="Phosphoglucosamine mutase"/>
    <property type="match status" value="1"/>
</dbReference>
<dbReference type="FunFam" id="3.40.120.10:FF:000001">
    <property type="entry name" value="Phosphoglucosamine mutase"/>
    <property type="match status" value="1"/>
</dbReference>
<dbReference type="FunFam" id="3.40.120.10:FF:000002">
    <property type="entry name" value="Phosphoglucosamine mutase"/>
    <property type="match status" value="1"/>
</dbReference>
<dbReference type="Gene3D" id="3.40.120.10">
    <property type="entry name" value="Alpha-D-Glucose-1,6-Bisphosphate, subunit A, domain 3"/>
    <property type="match status" value="3"/>
</dbReference>
<dbReference type="Gene3D" id="3.30.310.50">
    <property type="entry name" value="Alpha-D-phosphohexomutase, C-terminal domain"/>
    <property type="match status" value="1"/>
</dbReference>
<dbReference type="HAMAP" id="MF_01554_B">
    <property type="entry name" value="GlmM_B"/>
    <property type="match status" value="1"/>
</dbReference>
<dbReference type="InterPro" id="IPR005844">
    <property type="entry name" value="A-D-PHexomutase_a/b/a-I"/>
</dbReference>
<dbReference type="InterPro" id="IPR016055">
    <property type="entry name" value="A-D-PHexomutase_a/b/a-I/II/III"/>
</dbReference>
<dbReference type="InterPro" id="IPR005845">
    <property type="entry name" value="A-D-PHexomutase_a/b/a-II"/>
</dbReference>
<dbReference type="InterPro" id="IPR005846">
    <property type="entry name" value="A-D-PHexomutase_a/b/a-III"/>
</dbReference>
<dbReference type="InterPro" id="IPR005843">
    <property type="entry name" value="A-D-PHexomutase_C"/>
</dbReference>
<dbReference type="InterPro" id="IPR036900">
    <property type="entry name" value="A-D-PHexomutase_C_sf"/>
</dbReference>
<dbReference type="InterPro" id="IPR016066">
    <property type="entry name" value="A-D-PHexomutase_CS"/>
</dbReference>
<dbReference type="InterPro" id="IPR005841">
    <property type="entry name" value="Alpha-D-phosphohexomutase_SF"/>
</dbReference>
<dbReference type="InterPro" id="IPR006352">
    <property type="entry name" value="GlmM_bact"/>
</dbReference>
<dbReference type="InterPro" id="IPR050060">
    <property type="entry name" value="Phosphoglucosamine_mutase"/>
</dbReference>
<dbReference type="NCBIfam" id="TIGR01455">
    <property type="entry name" value="glmM"/>
    <property type="match status" value="1"/>
</dbReference>
<dbReference type="PANTHER" id="PTHR42946:SF1">
    <property type="entry name" value="PHOSPHOGLUCOMUTASE (ALPHA-D-GLUCOSE-1,6-BISPHOSPHATE-DEPENDENT)"/>
    <property type="match status" value="1"/>
</dbReference>
<dbReference type="PANTHER" id="PTHR42946">
    <property type="entry name" value="PHOSPHOHEXOSE MUTASE"/>
    <property type="match status" value="1"/>
</dbReference>
<dbReference type="Pfam" id="PF02878">
    <property type="entry name" value="PGM_PMM_I"/>
    <property type="match status" value="1"/>
</dbReference>
<dbReference type="Pfam" id="PF02879">
    <property type="entry name" value="PGM_PMM_II"/>
    <property type="match status" value="1"/>
</dbReference>
<dbReference type="Pfam" id="PF02880">
    <property type="entry name" value="PGM_PMM_III"/>
    <property type="match status" value="1"/>
</dbReference>
<dbReference type="Pfam" id="PF00408">
    <property type="entry name" value="PGM_PMM_IV"/>
    <property type="match status" value="1"/>
</dbReference>
<dbReference type="PRINTS" id="PR00509">
    <property type="entry name" value="PGMPMM"/>
</dbReference>
<dbReference type="SUPFAM" id="SSF55957">
    <property type="entry name" value="Phosphoglucomutase, C-terminal domain"/>
    <property type="match status" value="1"/>
</dbReference>
<dbReference type="SUPFAM" id="SSF53738">
    <property type="entry name" value="Phosphoglucomutase, first 3 domains"/>
    <property type="match status" value="3"/>
</dbReference>
<dbReference type="PROSITE" id="PS00710">
    <property type="entry name" value="PGM_PMM"/>
    <property type="match status" value="1"/>
</dbReference>
<name>GLMM_KINRD</name>
<protein>
    <recommendedName>
        <fullName evidence="1">Phosphoglucosamine mutase</fullName>
        <ecNumber evidence="1">5.4.2.10</ecNumber>
    </recommendedName>
</protein>
<sequence>MARLFGTDGVRGLANVDLTADMALGLAVAAASVLVEPGGNAHPRALVARDPRASGEFLSAAVVAGLASAGVDVLDIGVVPTPALAHLVDTSGADFGVMLSASHNPMPDNGLKIFARGGTKLPDDVEDVVERAYREGGGRRPTGAAVGRVHGGPDVEQDAQDTYVAHLLSTLPGGPGSLKGLHVVVDCANGAASAVSPRVLAEAGARVTTIFAAPDGLNINDGCGSTHLGPVTAAVLAHGADIGLAHDGDADRCLAVDARGNAVDGDQIMAVLTLALRDRGQLTDDTLVATVMSNLGLRLAMQREGVTMVETGVGDRYVLEALNAGGWSIGGEQSGHVVLPAHATTGDGVLTGLHLLARMAETGRSLEDLTGVVQRLPQVLVNVRGVDKSRAGSDAELLGAVADAERELGETGRVLLRPSGTEPLVRVMVEAAHTDHAQGVADRLADVVRKRLAL</sequence>
<reference key="1">
    <citation type="journal article" date="2008" name="PLoS ONE">
        <title>Survival in nuclear waste, extreme resistance, and potential applications gleaned from the genome sequence of Kineococcus radiotolerans SRS30216.</title>
        <authorList>
            <person name="Bagwell C.E."/>
            <person name="Bhat S."/>
            <person name="Hawkins G.M."/>
            <person name="Smith B.W."/>
            <person name="Biswas T."/>
            <person name="Hoover T.R."/>
            <person name="Saunders E."/>
            <person name="Han C.S."/>
            <person name="Tsodikov O.V."/>
            <person name="Shimkets L.J."/>
        </authorList>
    </citation>
    <scope>NUCLEOTIDE SEQUENCE [LARGE SCALE GENOMIC DNA]</scope>
    <source>
        <strain>ATCC BAA-149 / DSM 14245 / SRS30216</strain>
    </source>
</reference>
<keyword id="KW-0413">Isomerase</keyword>
<keyword id="KW-0460">Magnesium</keyword>
<keyword id="KW-0479">Metal-binding</keyword>
<keyword id="KW-0597">Phosphoprotein</keyword>
<keyword id="KW-1185">Reference proteome</keyword>
<evidence type="ECO:0000255" key="1">
    <source>
        <dbReference type="HAMAP-Rule" id="MF_01554"/>
    </source>
</evidence>
<comment type="function">
    <text evidence="1">Catalyzes the conversion of glucosamine-6-phosphate to glucosamine-1-phosphate.</text>
</comment>
<comment type="catalytic activity">
    <reaction evidence="1">
        <text>alpha-D-glucosamine 1-phosphate = D-glucosamine 6-phosphate</text>
        <dbReference type="Rhea" id="RHEA:23424"/>
        <dbReference type="ChEBI" id="CHEBI:58516"/>
        <dbReference type="ChEBI" id="CHEBI:58725"/>
        <dbReference type="EC" id="5.4.2.10"/>
    </reaction>
</comment>
<comment type="cofactor">
    <cofactor evidence="1">
        <name>Mg(2+)</name>
        <dbReference type="ChEBI" id="CHEBI:18420"/>
    </cofactor>
    <text evidence="1">Binds 1 Mg(2+) ion per subunit.</text>
</comment>
<comment type="PTM">
    <text evidence="1">Activated by phosphorylation.</text>
</comment>
<comment type="similarity">
    <text evidence="1">Belongs to the phosphohexose mutase family.</text>
</comment>
<feature type="chain" id="PRO_1000087768" description="Phosphoglucosamine mutase">
    <location>
        <begin position="1"/>
        <end position="454"/>
    </location>
</feature>
<feature type="active site" description="Phosphoserine intermediate" evidence="1">
    <location>
        <position position="102"/>
    </location>
</feature>
<feature type="binding site" description="via phosphate group" evidence="1">
    <location>
        <position position="102"/>
    </location>
    <ligand>
        <name>Mg(2+)</name>
        <dbReference type="ChEBI" id="CHEBI:18420"/>
    </ligand>
</feature>
<feature type="binding site" evidence="1">
    <location>
        <position position="247"/>
    </location>
    <ligand>
        <name>Mg(2+)</name>
        <dbReference type="ChEBI" id="CHEBI:18420"/>
    </ligand>
</feature>
<feature type="binding site" evidence="1">
    <location>
        <position position="249"/>
    </location>
    <ligand>
        <name>Mg(2+)</name>
        <dbReference type="ChEBI" id="CHEBI:18420"/>
    </ligand>
</feature>
<feature type="binding site" evidence="1">
    <location>
        <position position="251"/>
    </location>
    <ligand>
        <name>Mg(2+)</name>
        <dbReference type="ChEBI" id="CHEBI:18420"/>
    </ligand>
</feature>
<feature type="modified residue" description="Phosphoserine" evidence="1">
    <location>
        <position position="102"/>
    </location>
</feature>
<accession>A6W5X2</accession>